<reference key="1">
    <citation type="journal article" date="1992" name="Science">
        <title>Analysis of the Escherichia coli genome: DNA sequence of the region from 84.5 to 86.5 minutes.</title>
        <authorList>
            <person name="Daniels D.L."/>
            <person name="Plunkett G. III"/>
            <person name="Burland V.D."/>
            <person name="Blattner F.R."/>
        </authorList>
    </citation>
    <scope>NUCLEOTIDE SEQUENCE [LARGE SCALE GENOMIC DNA]</scope>
    <source>
        <strain>K12 / MG1655 / ATCC 47076</strain>
    </source>
</reference>
<reference key="2">
    <citation type="journal article" date="1997" name="Science">
        <title>The complete genome sequence of Escherichia coli K-12.</title>
        <authorList>
            <person name="Blattner F.R."/>
            <person name="Plunkett G. III"/>
            <person name="Bloch C.A."/>
            <person name="Perna N.T."/>
            <person name="Burland V."/>
            <person name="Riley M."/>
            <person name="Collado-Vides J."/>
            <person name="Glasner J.D."/>
            <person name="Rode C.K."/>
            <person name="Mayhew G.F."/>
            <person name="Gregor J."/>
            <person name="Davis N.W."/>
            <person name="Kirkpatrick H.A."/>
            <person name="Goeden M.A."/>
            <person name="Rose D.J."/>
            <person name="Mau B."/>
            <person name="Shao Y."/>
        </authorList>
    </citation>
    <scope>NUCLEOTIDE SEQUENCE [LARGE SCALE GENOMIC DNA]</scope>
    <source>
        <strain>K12 / MG1655 / ATCC 47076</strain>
    </source>
</reference>
<reference key="3">
    <citation type="journal article" date="2006" name="Mol. Syst. Biol.">
        <title>Highly accurate genome sequences of Escherichia coli K-12 strains MG1655 and W3110.</title>
        <authorList>
            <person name="Hayashi K."/>
            <person name="Morooka N."/>
            <person name="Yamamoto Y."/>
            <person name="Fujita K."/>
            <person name="Isono K."/>
            <person name="Choi S."/>
            <person name="Ohtsubo E."/>
            <person name="Baba T."/>
            <person name="Wanner B.L."/>
            <person name="Mori H."/>
            <person name="Horiuchi T."/>
        </authorList>
    </citation>
    <scope>NUCLEOTIDE SEQUENCE [LARGE SCALE GENOMIC DNA]</scope>
    <source>
        <strain>K12 / W3110 / ATCC 27325 / DSM 5911</strain>
    </source>
</reference>
<reference key="4">
    <citation type="journal article" date="1984" name="Nucleic Acids Res.">
        <title>The complete nucleotide sequence of the adenylate cyclase gene of Escherichia coli.</title>
        <authorList>
            <person name="Aiba H."/>
            <person name="Mori K."/>
            <person name="Tanaka M."/>
            <person name="Ooi T."/>
            <person name="Roy A."/>
            <person name="Danchin A."/>
        </authorList>
    </citation>
    <scope>NUCLEOTIDE SEQUENCE [GENOMIC DNA] OF 1-116</scope>
</reference>
<feature type="chain" id="PRO_0000169837" description="Protein YzcX">
    <location>
        <begin position="1"/>
        <end position="161"/>
    </location>
</feature>
<protein>
    <recommendedName>
        <fullName>Protein YzcX</fullName>
    </recommendedName>
    <alternativeName>
        <fullName evidence="1">CyaX</fullName>
    </alternativeName>
    <alternativeName>
        <fullName>O161</fullName>
    </alternativeName>
</protein>
<organism>
    <name type="scientific">Escherichia coli (strain K12)</name>
    <dbReference type="NCBI Taxonomy" id="83333"/>
    <lineage>
        <taxon>Bacteria</taxon>
        <taxon>Pseudomonadati</taxon>
        <taxon>Pseudomonadota</taxon>
        <taxon>Gammaproteobacteria</taxon>
        <taxon>Enterobacterales</taxon>
        <taxon>Enterobacteriaceae</taxon>
        <taxon>Escherichia</taxon>
    </lineage>
</organism>
<accession>P11291</accession>
<accession>A0A385XJR3</accession>
<accession>Q2M8B3</accession>
<gene>
    <name type="primary">yzcX</name>
    <name evidence="1" type="synonym">cyaX</name>
    <name type="ordered locus">b3808</name>
    <name type="ordered locus">JW3780</name>
</gene>
<dbReference type="EMBL" id="M87049">
    <property type="protein sequence ID" value="AAA67604.1"/>
    <property type="molecule type" value="Genomic_DNA"/>
</dbReference>
<dbReference type="EMBL" id="U00096">
    <property type="protein sequence ID" value="AYC08256.1"/>
    <property type="molecule type" value="Genomic_DNA"/>
</dbReference>
<dbReference type="EMBL" id="AP009048">
    <property type="protein sequence ID" value="BAE77493.1"/>
    <property type="molecule type" value="Genomic_DNA"/>
</dbReference>
<dbReference type="EMBL" id="X01653">
    <property type="protein sequence ID" value="CAA25818.1"/>
    <property type="molecule type" value="Genomic_DNA"/>
</dbReference>
<dbReference type="PIR" id="S30698">
    <property type="entry name" value="S30698"/>
</dbReference>
<dbReference type="BioGRID" id="4262611">
    <property type="interactions" value="17"/>
</dbReference>
<dbReference type="FunCoup" id="P11291">
    <property type="interactions" value="97"/>
</dbReference>
<dbReference type="IntAct" id="P11291">
    <property type="interactions" value="4"/>
</dbReference>
<dbReference type="EnsemblBacteria" id="AYC08256">
    <property type="protein sequence ID" value="AYC08256"/>
    <property type="gene ID" value="b3808"/>
</dbReference>
<dbReference type="KEGG" id="ecj:JW3780"/>
<dbReference type="HOGENOM" id="CLU_139046_0_0_6"/>
<dbReference type="InParanoid" id="P11291"/>
<dbReference type="BioCyc" id="EcoCyc:G7802-MONOMER"/>
<dbReference type="PRO" id="PR:P11291"/>
<dbReference type="Proteomes" id="UP000000625">
    <property type="component" value="Chromosome"/>
</dbReference>
<dbReference type="GO" id="GO:0009279">
    <property type="term" value="C:cell outer membrane"/>
    <property type="evidence" value="ECO:0000314"/>
    <property type="project" value="EcoCyc"/>
</dbReference>
<dbReference type="AntiFam" id="ANF00073">
    <property type="entry name" value="Shadow ORF"/>
</dbReference>
<dbReference type="InterPro" id="IPR016498">
    <property type="entry name" value="YzcX"/>
</dbReference>
<dbReference type="PIRSF" id="PIRSF006864">
    <property type="entry name" value="UCP006864"/>
    <property type="match status" value="1"/>
</dbReference>
<keyword id="KW-1185">Reference proteome</keyword>
<name>YZCX_ECOLI</name>
<sequence length="161" mass="17342">MVAALFGCQPYLVQRLLAVDNDFAAILKGNGQYAAVDFAVDIAVAIPVVQAFFNGQPELISQAMKFTVVHCCILFLSDGGSIAAWGQGFKVCTSAAAFRHDSSVTGIMMSLCSERFVSSLGRSYTTSFPVSGKHYDQVYRASILTLTELKKTTNKPHCDSA</sequence>
<evidence type="ECO:0000303" key="1">
    <source>
    </source>
</evidence>
<proteinExistence type="predicted"/>